<reference key="1">
    <citation type="submission" date="2005-08" db="EMBL/GenBank/DDBJ databases">
        <title>Complete sequence of chromosome 1 of Synechococcus elongatus PCC 7942.</title>
        <authorList>
            <consortium name="US DOE Joint Genome Institute"/>
            <person name="Copeland A."/>
            <person name="Lucas S."/>
            <person name="Lapidus A."/>
            <person name="Barry K."/>
            <person name="Detter J.C."/>
            <person name="Glavina T."/>
            <person name="Hammon N."/>
            <person name="Israni S."/>
            <person name="Pitluck S."/>
            <person name="Schmutz J."/>
            <person name="Larimer F."/>
            <person name="Land M."/>
            <person name="Kyrpides N."/>
            <person name="Lykidis A."/>
            <person name="Golden S."/>
            <person name="Richardson P."/>
        </authorList>
    </citation>
    <scope>NUCLEOTIDE SEQUENCE [LARGE SCALE GENOMIC DNA]</scope>
    <source>
        <strain>ATCC 33912 / PCC 7942 / FACHB-805</strain>
    </source>
</reference>
<comment type="function">
    <text evidence="1">Catalyzes the conversion of 4-hydroxy-tetrahydrodipicolinate (HTPA) to tetrahydrodipicolinate.</text>
</comment>
<comment type="catalytic activity">
    <reaction evidence="1">
        <text>(S)-2,3,4,5-tetrahydrodipicolinate + NAD(+) + H2O = (2S,4S)-4-hydroxy-2,3,4,5-tetrahydrodipicolinate + NADH + H(+)</text>
        <dbReference type="Rhea" id="RHEA:35323"/>
        <dbReference type="ChEBI" id="CHEBI:15377"/>
        <dbReference type="ChEBI" id="CHEBI:15378"/>
        <dbReference type="ChEBI" id="CHEBI:16845"/>
        <dbReference type="ChEBI" id="CHEBI:57540"/>
        <dbReference type="ChEBI" id="CHEBI:57945"/>
        <dbReference type="ChEBI" id="CHEBI:67139"/>
        <dbReference type="EC" id="1.17.1.8"/>
    </reaction>
</comment>
<comment type="catalytic activity">
    <reaction evidence="1">
        <text>(S)-2,3,4,5-tetrahydrodipicolinate + NADP(+) + H2O = (2S,4S)-4-hydroxy-2,3,4,5-tetrahydrodipicolinate + NADPH + H(+)</text>
        <dbReference type="Rhea" id="RHEA:35331"/>
        <dbReference type="ChEBI" id="CHEBI:15377"/>
        <dbReference type="ChEBI" id="CHEBI:15378"/>
        <dbReference type="ChEBI" id="CHEBI:16845"/>
        <dbReference type="ChEBI" id="CHEBI:57783"/>
        <dbReference type="ChEBI" id="CHEBI:58349"/>
        <dbReference type="ChEBI" id="CHEBI:67139"/>
        <dbReference type="EC" id="1.17.1.8"/>
    </reaction>
</comment>
<comment type="pathway">
    <text evidence="1">Amino-acid biosynthesis; L-lysine biosynthesis via DAP pathway; (S)-tetrahydrodipicolinate from L-aspartate: step 4/4.</text>
</comment>
<comment type="subcellular location">
    <subcellularLocation>
        <location evidence="1">Cytoplasm</location>
    </subcellularLocation>
</comment>
<comment type="similarity">
    <text evidence="1">Belongs to the DapB family.</text>
</comment>
<comment type="caution">
    <text evidence="2">Was originally thought to be a dihydrodipicolinate reductase (DHDPR), catalyzing the conversion of dihydrodipicolinate to tetrahydrodipicolinate. However, it was shown in E.coli that the substrate of the enzymatic reaction is not dihydrodipicolinate (DHDP) but in fact (2S,4S)-4-hydroxy-2,3,4,5-tetrahydrodipicolinic acid (HTPA), the product released by the DapA-catalyzed reaction.</text>
</comment>
<gene>
    <name evidence="1" type="primary">dapB</name>
    <name type="ordered locus">Synpcc7942_2136</name>
</gene>
<proteinExistence type="inferred from homology"/>
<name>DAPB_SYNE7</name>
<sequence>MAHPIPVVVNGATGKMGRETIKAIAAADDVTLVGAIARSADVQGQDIGEIVGLGPLEVPVTNDLEGMLCLASQEREVPVVVDFTHPDCIYDNVRKAIAYGVRPVVGTTGLNNEQLQELAEFAEKASVGCLVIPNFSIGMVLLMQAAIQASRFYDHVEILELHHDQKADAPSGTAIKTAQMLAELGKTFNPPKVTEKETMPGARGAVGPENIRIHSVRLPGLIAHEEVIFGAPGEILTLRHDTMDRSCYMPGVLLAVRKVRQLTGLIYGLDRIL</sequence>
<evidence type="ECO:0000255" key="1">
    <source>
        <dbReference type="HAMAP-Rule" id="MF_00102"/>
    </source>
</evidence>
<evidence type="ECO:0000305" key="2"/>
<keyword id="KW-0028">Amino-acid biosynthesis</keyword>
<keyword id="KW-0963">Cytoplasm</keyword>
<keyword id="KW-0220">Diaminopimelate biosynthesis</keyword>
<keyword id="KW-0457">Lysine biosynthesis</keyword>
<keyword id="KW-0520">NAD</keyword>
<keyword id="KW-0521">NADP</keyword>
<keyword id="KW-0560">Oxidoreductase</keyword>
<keyword id="KW-1185">Reference proteome</keyword>
<organism>
    <name type="scientific">Synechococcus elongatus (strain ATCC 33912 / PCC 7942 / FACHB-805)</name>
    <name type="common">Anacystis nidulans R2</name>
    <dbReference type="NCBI Taxonomy" id="1140"/>
    <lineage>
        <taxon>Bacteria</taxon>
        <taxon>Bacillati</taxon>
        <taxon>Cyanobacteriota</taxon>
        <taxon>Cyanophyceae</taxon>
        <taxon>Synechococcales</taxon>
        <taxon>Synechococcaceae</taxon>
        <taxon>Synechococcus</taxon>
    </lineage>
</organism>
<protein>
    <recommendedName>
        <fullName evidence="1">4-hydroxy-tetrahydrodipicolinate reductase</fullName>
        <shortName evidence="1">HTPA reductase</shortName>
        <ecNumber evidence="1">1.17.1.8</ecNumber>
    </recommendedName>
</protein>
<dbReference type="EC" id="1.17.1.8" evidence="1"/>
<dbReference type="EMBL" id="CP000100">
    <property type="protein sequence ID" value="ABB58166.1"/>
    <property type="molecule type" value="Genomic_DNA"/>
</dbReference>
<dbReference type="RefSeq" id="WP_011378334.1">
    <property type="nucleotide sequence ID" value="NZ_JACJTX010000001.1"/>
</dbReference>
<dbReference type="SMR" id="Q31LA3"/>
<dbReference type="STRING" id="1140.Synpcc7942_2136"/>
<dbReference type="PaxDb" id="1140-Synpcc7942_2136"/>
<dbReference type="GeneID" id="72431014"/>
<dbReference type="KEGG" id="syf:Synpcc7942_2136"/>
<dbReference type="eggNOG" id="COG0289">
    <property type="taxonomic scope" value="Bacteria"/>
</dbReference>
<dbReference type="HOGENOM" id="CLU_047479_0_1_3"/>
<dbReference type="OrthoDB" id="9790352at2"/>
<dbReference type="BioCyc" id="SYNEL:SYNPCC7942_2136-MONOMER"/>
<dbReference type="UniPathway" id="UPA00034">
    <property type="reaction ID" value="UER00018"/>
</dbReference>
<dbReference type="Proteomes" id="UP000889800">
    <property type="component" value="Chromosome"/>
</dbReference>
<dbReference type="GO" id="GO:0005829">
    <property type="term" value="C:cytosol"/>
    <property type="evidence" value="ECO:0007669"/>
    <property type="project" value="TreeGrafter"/>
</dbReference>
<dbReference type="GO" id="GO:0008839">
    <property type="term" value="F:4-hydroxy-tetrahydrodipicolinate reductase"/>
    <property type="evidence" value="ECO:0007669"/>
    <property type="project" value="UniProtKB-EC"/>
</dbReference>
<dbReference type="GO" id="GO:0051287">
    <property type="term" value="F:NAD binding"/>
    <property type="evidence" value="ECO:0007669"/>
    <property type="project" value="UniProtKB-UniRule"/>
</dbReference>
<dbReference type="GO" id="GO:0050661">
    <property type="term" value="F:NADP binding"/>
    <property type="evidence" value="ECO:0007669"/>
    <property type="project" value="UniProtKB-UniRule"/>
</dbReference>
<dbReference type="GO" id="GO:0016726">
    <property type="term" value="F:oxidoreductase activity, acting on CH or CH2 groups, NAD or NADP as acceptor"/>
    <property type="evidence" value="ECO:0007669"/>
    <property type="project" value="UniProtKB-UniRule"/>
</dbReference>
<dbReference type="GO" id="GO:0019877">
    <property type="term" value="P:diaminopimelate biosynthetic process"/>
    <property type="evidence" value="ECO:0007669"/>
    <property type="project" value="UniProtKB-UniRule"/>
</dbReference>
<dbReference type="GO" id="GO:0009089">
    <property type="term" value="P:lysine biosynthetic process via diaminopimelate"/>
    <property type="evidence" value="ECO:0007669"/>
    <property type="project" value="UniProtKB-UniRule"/>
</dbReference>
<dbReference type="CDD" id="cd02274">
    <property type="entry name" value="DHDPR_N"/>
    <property type="match status" value="1"/>
</dbReference>
<dbReference type="FunFam" id="3.30.360.10:FF:000009">
    <property type="entry name" value="4-hydroxy-tetrahydrodipicolinate reductase"/>
    <property type="match status" value="1"/>
</dbReference>
<dbReference type="Gene3D" id="3.30.360.10">
    <property type="entry name" value="Dihydrodipicolinate Reductase, domain 2"/>
    <property type="match status" value="1"/>
</dbReference>
<dbReference type="Gene3D" id="3.40.50.720">
    <property type="entry name" value="NAD(P)-binding Rossmann-like Domain"/>
    <property type="match status" value="1"/>
</dbReference>
<dbReference type="HAMAP" id="MF_00102">
    <property type="entry name" value="DapB"/>
    <property type="match status" value="1"/>
</dbReference>
<dbReference type="InterPro" id="IPR022663">
    <property type="entry name" value="DapB_C"/>
</dbReference>
<dbReference type="InterPro" id="IPR000846">
    <property type="entry name" value="DapB_N"/>
</dbReference>
<dbReference type="InterPro" id="IPR022664">
    <property type="entry name" value="DapB_N_CS"/>
</dbReference>
<dbReference type="InterPro" id="IPR023940">
    <property type="entry name" value="DHDPR_bac"/>
</dbReference>
<dbReference type="InterPro" id="IPR036291">
    <property type="entry name" value="NAD(P)-bd_dom_sf"/>
</dbReference>
<dbReference type="NCBIfam" id="TIGR00036">
    <property type="entry name" value="dapB"/>
    <property type="match status" value="1"/>
</dbReference>
<dbReference type="PANTHER" id="PTHR20836:SF0">
    <property type="entry name" value="4-HYDROXY-TETRAHYDRODIPICOLINATE REDUCTASE 1, CHLOROPLASTIC-RELATED"/>
    <property type="match status" value="1"/>
</dbReference>
<dbReference type="PANTHER" id="PTHR20836">
    <property type="entry name" value="DIHYDRODIPICOLINATE REDUCTASE"/>
    <property type="match status" value="1"/>
</dbReference>
<dbReference type="Pfam" id="PF05173">
    <property type="entry name" value="DapB_C"/>
    <property type="match status" value="1"/>
</dbReference>
<dbReference type="Pfam" id="PF01113">
    <property type="entry name" value="DapB_N"/>
    <property type="match status" value="1"/>
</dbReference>
<dbReference type="PIRSF" id="PIRSF000161">
    <property type="entry name" value="DHPR"/>
    <property type="match status" value="1"/>
</dbReference>
<dbReference type="SUPFAM" id="SSF55347">
    <property type="entry name" value="Glyceraldehyde-3-phosphate dehydrogenase-like, C-terminal domain"/>
    <property type="match status" value="1"/>
</dbReference>
<dbReference type="SUPFAM" id="SSF51735">
    <property type="entry name" value="NAD(P)-binding Rossmann-fold domains"/>
    <property type="match status" value="1"/>
</dbReference>
<dbReference type="PROSITE" id="PS01298">
    <property type="entry name" value="DAPB"/>
    <property type="match status" value="1"/>
</dbReference>
<accession>Q31LA3</accession>
<feature type="chain" id="PRO_1000008653" description="4-hydroxy-tetrahydrodipicolinate reductase">
    <location>
        <begin position="1"/>
        <end position="273"/>
    </location>
</feature>
<feature type="active site" description="Proton donor/acceptor" evidence="1">
    <location>
        <position position="162"/>
    </location>
</feature>
<feature type="active site" description="Proton donor" evidence="1">
    <location>
        <position position="166"/>
    </location>
</feature>
<feature type="binding site" evidence="1">
    <location>
        <begin position="11"/>
        <end position="16"/>
    </location>
    <ligand>
        <name>NAD(+)</name>
        <dbReference type="ChEBI" id="CHEBI:57540"/>
    </ligand>
</feature>
<feature type="binding site" evidence="1">
    <location>
        <begin position="106"/>
        <end position="108"/>
    </location>
    <ligand>
        <name>NAD(+)</name>
        <dbReference type="ChEBI" id="CHEBI:57540"/>
    </ligand>
</feature>
<feature type="binding site" evidence="1">
    <location>
        <position position="163"/>
    </location>
    <ligand>
        <name>(S)-2,3,4,5-tetrahydrodipicolinate</name>
        <dbReference type="ChEBI" id="CHEBI:16845"/>
    </ligand>
</feature>
<feature type="binding site" evidence="1">
    <location>
        <begin position="172"/>
        <end position="173"/>
    </location>
    <ligand>
        <name>(S)-2,3,4,5-tetrahydrodipicolinate</name>
        <dbReference type="ChEBI" id="CHEBI:16845"/>
    </ligand>
</feature>